<comment type="function">
    <text evidence="1">Produces ATP from ADP in the presence of a proton gradient across the membrane. The gamma chain is believed to be important in regulating ATPase activity and the flow of protons through the CF(0) complex.</text>
</comment>
<comment type="subunit">
    <text evidence="1">F-type ATPases have 2 components, CF(1) - the catalytic core - and CF(0) - the membrane proton channel. CF(1) has five subunits: alpha(3), beta(3), gamma(1), delta(1), epsilon(1). CF(0) has three main subunits: a, b and c.</text>
</comment>
<comment type="subcellular location">
    <subcellularLocation>
        <location evidence="1">Cell inner membrane</location>
        <topology evidence="1">Peripheral membrane protein</topology>
    </subcellularLocation>
</comment>
<comment type="similarity">
    <text evidence="1">Belongs to the ATPase gamma chain family.</text>
</comment>
<feature type="chain" id="PRO_0000073305" description="ATP synthase gamma chain">
    <location>
        <begin position="1"/>
        <end position="288"/>
    </location>
</feature>
<accession>Q5ZRA0</accession>
<gene>
    <name evidence="1" type="primary">atpG</name>
    <name type="ordered locus">lpg2983</name>
</gene>
<proteinExistence type="inferred from homology"/>
<protein>
    <recommendedName>
        <fullName evidence="1">ATP synthase gamma chain</fullName>
    </recommendedName>
    <alternativeName>
        <fullName evidence="1">ATP synthase F1 sector gamma subunit</fullName>
    </alternativeName>
    <alternativeName>
        <fullName evidence="1">F-ATPase gamma subunit</fullName>
    </alternativeName>
</protein>
<evidence type="ECO:0000255" key="1">
    <source>
        <dbReference type="HAMAP-Rule" id="MF_00815"/>
    </source>
</evidence>
<keyword id="KW-0066">ATP synthesis</keyword>
<keyword id="KW-0997">Cell inner membrane</keyword>
<keyword id="KW-1003">Cell membrane</keyword>
<keyword id="KW-0139">CF(1)</keyword>
<keyword id="KW-0375">Hydrogen ion transport</keyword>
<keyword id="KW-0406">Ion transport</keyword>
<keyword id="KW-0472">Membrane</keyword>
<keyword id="KW-1185">Reference proteome</keyword>
<keyword id="KW-0813">Transport</keyword>
<reference key="1">
    <citation type="journal article" date="2004" name="Science">
        <title>The genomic sequence of the accidental pathogen Legionella pneumophila.</title>
        <authorList>
            <person name="Chien M."/>
            <person name="Morozova I."/>
            <person name="Shi S."/>
            <person name="Sheng H."/>
            <person name="Chen J."/>
            <person name="Gomez S.M."/>
            <person name="Asamani G."/>
            <person name="Hill K."/>
            <person name="Nuara J."/>
            <person name="Feder M."/>
            <person name="Rineer J."/>
            <person name="Greenberg J.J."/>
            <person name="Steshenko V."/>
            <person name="Park S.H."/>
            <person name="Zhao B."/>
            <person name="Teplitskaya E."/>
            <person name="Edwards J.R."/>
            <person name="Pampou S."/>
            <person name="Georghiou A."/>
            <person name="Chou I.-C."/>
            <person name="Iannuccilli W."/>
            <person name="Ulz M.E."/>
            <person name="Kim D.H."/>
            <person name="Geringer-Sameth A."/>
            <person name="Goldsberry C."/>
            <person name="Morozov P."/>
            <person name="Fischer S.G."/>
            <person name="Segal G."/>
            <person name="Qu X."/>
            <person name="Rzhetsky A."/>
            <person name="Zhang P."/>
            <person name="Cayanis E."/>
            <person name="De Jong P.J."/>
            <person name="Ju J."/>
            <person name="Kalachikov S."/>
            <person name="Shuman H.A."/>
            <person name="Russo J.J."/>
        </authorList>
    </citation>
    <scope>NUCLEOTIDE SEQUENCE [LARGE SCALE GENOMIC DNA]</scope>
    <source>
        <strain>Philadelphia 1 / ATCC 33152 / DSM 7513</strain>
    </source>
</reference>
<name>ATPG_LEGPH</name>
<organism>
    <name type="scientific">Legionella pneumophila subsp. pneumophila (strain Philadelphia 1 / ATCC 33152 / DSM 7513)</name>
    <dbReference type="NCBI Taxonomy" id="272624"/>
    <lineage>
        <taxon>Bacteria</taxon>
        <taxon>Pseudomonadati</taxon>
        <taxon>Pseudomonadota</taxon>
        <taxon>Gammaproteobacteria</taxon>
        <taxon>Legionellales</taxon>
        <taxon>Legionellaceae</taxon>
        <taxon>Legionella</taxon>
    </lineage>
</organism>
<dbReference type="EMBL" id="AE017354">
    <property type="protein sequence ID" value="AAU29028.1"/>
    <property type="molecule type" value="Genomic_DNA"/>
</dbReference>
<dbReference type="RefSeq" id="WP_010948667.1">
    <property type="nucleotide sequence ID" value="NC_002942.5"/>
</dbReference>
<dbReference type="RefSeq" id="YP_096975.1">
    <property type="nucleotide sequence ID" value="NC_002942.5"/>
</dbReference>
<dbReference type="SMR" id="Q5ZRA0"/>
<dbReference type="STRING" id="272624.lpg2983"/>
<dbReference type="PaxDb" id="272624-lpg2983"/>
<dbReference type="GeneID" id="57036989"/>
<dbReference type="KEGG" id="lpn:lpg2983"/>
<dbReference type="PATRIC" id="fig|272624.6.peg.3189"/>
<dbReference type="eggNOG" id="COG0224">
    <property type="taxonomic scope" value="Bacteria"/>
</dbReference>
<dbReference type="HOGENOM" id="CLU_050669_0_1_6"/>
<dbReference type="OrthoDB" id="9812769at2"/>
<dbReference type="Proteomes" id="UP000000609">
    <property type="component" value="Chromosome"/>
</dbReference>
<dbReference type="GO" id="GO:0005886">
    <property type="term" value="C:plasma membrane"/>
    <property type="evidence" value="ECO:0007669"/>
    <property type="project" value="UniProtKB-SubCell"/>
</dbReference>
<dbReference type="GO" id="GO:0045259">
    <property type="term" value="C:proton-transporting ATP synthase complex"/>
    <property type="evidence" value="ECO:0007669"/>
    <property type="project" value="UniProtKB-KW"/>
</dbReference>
<dbReference type="GO" id="GO:0005524">
    <property type="term" value="F:ATP binding"/>
    <property type="evidence" value="ECO:0007669"/>
    <property type="project" value="UniProtKB-UniRule"/>
</dbReference>
<dbReference type="GO" id="GO:0046933">
    <property type="term" value="F:proton-transporting ATP synthase activity, rotational mechanism"/>
    <property type="evidence" value="ECO:0007669"/>
    <property type="project" value="UniProtKB-UniRule"/>
</dbReference>
<dbReference type="GO" id="GO:0042777">
    <property type="term" value="P:proton motive force-driven plasma membrane ATP synthesis"/>
    <property type="evidence" value="ECO:0007669"/>
    <property type="project" value="UniProtKB-UniRule"/>
</dbReference>
<dbReference type="CDD" id="cd12151">
    <property type="entry name" value="F1-ATPase_gamma"/>
    <property type="match status" value="1"/>
</dbReference>
<dbReference type="FunFam" id="1.10.287.80:FF:000005">
    <property type="entry name" value="ATP synthase gamma chain"/>
    <property type="match status" value="1"/>
</dbReference>
<dbReference type="FunFam" id="3.40.1380.10:FF:000006">
    <property type="entry name" value="ATP synthase gamma chain"/>
    <property type="match status" value="1"/>
</dbReference>
<dbReference type="Gene3D" id="3.40.1380.10">
    <property type="match status" value="1"/>
</dbReference>
<dbReference type="Gene3D" id="1.10.287.80">
    <property type="entry name" value="ATP synthase, gamma subunit, helix hairpin domain"/>
    <property type="match status" value="2"/>
</dbReference>
<dbReference type="HAMAP" id="MF_00815">
    <property type="entry name" value="ATP_synth_gamma_bact"/>
    <property type="match status" value="1"/>
</dbReference>
<dbReference type="InterPro" id="IPR035968">
    <property type="entry name" value="ATP_synth_F1_ATPase_gsu"/>
</dbReference>
<dbReference type="InterPro" id="IPR000131">
    <property type="entry name" value="ATP_synth_F1_gsu"/>
</dbReference>
<dbReference type="InterPro" id="IPR023632">
    <property type="entry name" value="ATP_synth_F1_gsu_CS"/>
</dbReference>
<dbReference type="NCBIfam" id="TIGR01146">
    <property type="entry name" value="ATPsyn_F1gamma"/>
    <property type="match status" value="1"/>
</dbReference>
<dbReference type="NCBIfam" id="NF004144">
    <property type="entry name" value="PRK05621.1-1"/>
    <property type="match status" value="1"/>
</dbReference>
<dbReference type="PANTHER" id="PTHR11693">
    <property type="entry name" value="ATP SYNTHASE GAMMA CHAIN"/>
    <property type="match status" value="1"/>
</dbReference>
<dbReference type="PANTHER" id="PTHR11693:SF22">
    <property type="entry name" value="ATP SYNTHASE SUBUNIT GAMMA, MITOCHONDRIAL"/>
    <property type="match status" value="1"/>
</dbReference>
<dbReference type="Pfam" id="PF00231">
    <property type="entry name" value="ATP-synt"/>
    <property type="match status" value="1"/>
</dbReference>
<dbReference type="PRINTS" id="PR00126">
    <property type="entry name" value="ATPASEGAMMA"/>
</dbReference>
<dbReference type="SUPFAM" id="SSF52943">
    <property type="entry name" value="ATP synthase (F1-ATPase), gamma subunit"/>
    <property type="match status" value="1"/>
</dbReference>
<dbReference type="PROSITE" id="PS00153">
    <property type="entry name" value="ATPASE_GAMMA"/>
    <property type="match status" value="1"/>
</dbReference>
<sequence>MAGAKEIRSKISSINKTRKITRAMEMVAASKMRKTQERMRASKPYANKIYEVIKHIARAASEYRHPFMSEREIKRIGIIVVTTDRGLCGGLNSNLFRETIRTIRNWQEHGKEVDIAVIGRKGQAFFRRVGGNILGSIDHLGDTPSINDFIGVVKIMLDAYYNGTIDSLHIVYNEFINTMTQKPFVKQLLPLPKSEEDKKTLGHHWDYIYEPEAKELLDEILERYIELQVYQAVVENIACEQAAKMIAMKSATDNAGDLIKEFQLAYNKARQAAITQELAEIVGGAAAL</sequence>